<name>FATE1_PIG</name>
<gene>
    <name type="primary">FATE1</name>
    <name type="synonym">FATE</name>
</gene>
<sequence>MAGGSTNTKKIEMSLAEELVPKSQEPSREQVLIAEMLEHGIRSLGASQSRQKLDSKISDSAAAWNLAANKSKKTGPQLPPKKASQEPNQEGGFQGMGFLYERNLGADVIAEIGLEELNGLEMEIMRRQLQVITGRLRALEDQGATWRHRETLFFTMLVSVCVANLWLWLRQ</sequence>
<comment type="function">
    <text evidence="2">Involved in the regulation of endoplasmic reticulum (ER)-mitochondria coupling. Negatively regulates the ER-mitochondria distance and Ca(2+) transfer from ER to mitochondria possibly implicating it in the regulation of apoptosis. May collaborate with RNF183 to restrain BIK protein levels thus regulating apoptotic signaling.</text>
</comment>
<comment type="subunit">
    <text evidence="2">Interacts with BIK and RNF183. Interacts with IMMT/MIC60and EMD.</text>
</comment>
<comment type="subcellular location">
    <subcellularLocation>
        <location evidence="2">Mitochondrion</location>
    </subcellularLocation>
    <subcellularLocation>
        <location evidence="2">Mitochondrion outer membrane</location>
    </subcellularLocation>
    <subcellularLocation>
        <location evidence="2">Endoplasmic reticulum membrane</location>
        <topology evidence="1">Single-pass membrane protein</topology>
        <orientation evidence="2">Cytoplasmic side</orientation>
    </subcellularLocation>
    <text evidence="2">Localized to specific membrane structures termed mitochondria-associated membranes (MAMs) which connect the endoplasmic reticulum (ER) and the mitochondria. Also associated with the outer surface of mitochondria at sites that are not in close contact with the ER.</text>
</comment>
<evidence type="ECO:0000250" key="1">
    <source>
        <dbReference type="UniProtKB" id="Q8CEK7"/>
    </source>
</evidence>
<evidence type="ECO:0000250" key="2">
    <source>
        <dbReference type="UniProtKB" id="Q969F0"/>
    </source>
</evidence>
<evidence type="ECO:0000255" key="3"/>
<evidence type="ECO:0000256" key="4">
    <source>
        <dbReference type="SAM" id="MobiDB-lite"/>
    </source>
</evidence>
<organism>
    <name type="scientific">Sus scrofa</name>
    <name type="common">Pig</name>
    <dbReference type="NCBI Taxonomy" id="9823"/>
    <lineage>
        <taxon>Eukaryota</taxon>
        <taxon>Metazoa</taxon>
        <taxon>Chordata</taxon>
        <taxon>Craniata</taxon>
        <taxon>Vertebrata</taxon>
        <taxon>Euteleostomi</taxon>
        <taxon>Mammalia</taxon>
        <taxon>Eutheria</taxon>
        <taxon>Laurasiatheria</taxon>
        <taxon>Artiodactyla</taxon>
        <taxon>Suina</taxon>
        <taxon>Suidae</taxon>
        <taxon>Sus</taxon>
    </lineage>
</organism>
<reference key="1">
    <citation type="journal article" date="2001" name="Mol. Cell. Endocrinol.">
        <title>Human FATE is a novel X-linked gene expressed in fetal and adult testis.</title>
        <authorList>
            <person name="Olesen C."/>
            <person name="Larsen N.J."/>
            <person name="Byskov A.G."/>
            <person name="Harboe T.L."/>
            <person name="Tommerup N."/>
        </authorList>
    </citation>
    <scope>NUCLEOTIDE SEQUENCE [MRNA]</scope>
</reference>
<keyword id="KW-0053">Apoptosis</keyword>
<keyword id="KW-0256">Endoplasmic reticulum</keyword>
<keyword id="KW-0472">Membrane</keyword>
<keyword id="KW-0496">Mitochondrion</keyword>
<keyword id="KW-1000">Mitochondrion outer membrane</keyword>
<keyword id="KW-1185">Reference proteome</keyword>
<keyword id="KW-0812">Transmembrane</keyword>
<keyword id="KW-1133">Transmembrane helix</keyword>
<feature type="chain" id="PRO_0000087202" description="Fetal and adult testis-expressed transcript protein homolog">
    <location>
        <begin position="1"/>
        <end position="171"/>
    </location>
</feature>
<feature type="transmembrane region" description="Helical" evidence="3">
    <location>
        <begin position="151"/>
        <end position="169"/>
    </location>
</feature>
<feature type="region of interest" description="Disordered" evidence="4">
    <location>
        <begin position="1"/>
        <end position="27"/>
    </location>
</feature>
<feature type="region of interest" description="Disordered" evidence="4">
    <location>
        <begin position="68"/>
        <end position="92"/>
    </location>
</feature>
<accession>Q95LB4</accession>
<dbReference type="EMBL" id="AF345986">
    <property type="protein sequence ID" value="AAL27184.1"/>
    <property type="molecule type" value="mRNA"/>
</dbReference>
<dbReference type="RefSeq" id="NP_998962.1">
    <property type="nucleotide sequence ID" value="NM_213797.1"/>
</dbReference>
<dbReference type="SMR" id="Q95LB4"/>
<dbReference type="FunCoup" id="Q95LB4">
    <property type="interactions" value="47"/>
</dbReference>
<dbReference type="STRING" id="9823.ENSSSCP00000047449"/>
<dbReference type="Ensembl" id="ENSSSCT00000062322.3">
    <property type="protein sequence ID" value="ENSSSCP00000047449.1"/>
    <property type="gene ID" value="ENSSSCG00000039345.3"/>
</dbReference>
<dbReference type="Ensembl" id="ENSSSCT00025077962.1">
    <property type="protein sequence ID" value="ENSSSCP00025033796.1"/>
    <property type="gene ID" value="ENSSSCG00025056999.1"/>
</dbReference>
<dbReference type="Ensembl" id="ENSSSCT00030073673.1">
    <property type="protein sequence ID" value="ENSSSCP00030033720.1"/>
    <property type="gene ID" value="ENSSSCG00030052809.1"/>
</dbReference>
<dbReference type="Ensembl" id="ENSSSCT00040099047.1">
    <property type="protein sequence ID" value="ENSSSCP00040044316.1"/>
    <property type="gene ID" value="ENSSSCG00040072009.1"/>
</dbReference>
<dbReference type="Ensembl" id="ENSSSCT00045059435.1">
    <property type="protein sequence ID" value="ENSSSCP00045041663.1"/>
    <property type="gene ID" value="ENSSSCG00045034686.1"/>
</dbReference>
<dbReference type="Ensembl" id="ENSSSCT00050053053.1">
    <property type="protein sequence ID" value="ENSSSCP00050022283.1"/>
    <property type="gene ID" value="ENSSSCG00050039321.1"/>
</dbReference>
<dbReference type="Ensembl" id="ENSSSCT00055041451.1">
    <property type="protein sequence ID" value="ENSSSCP00055032992.1"/>
    <property type="gene ID" value="ENSSSCG00055021107.1"/>
</dbReference>
<dbReference type="Ensembl" id="ENSSSCT00060037406.1">
    <property type="protein sequence ID" value="ENSSSCP00060015918.1"/>
    <property type="gene ID" value="ENSSSCG00060027629.1"/>
</dbReference>
<dbReference type="Ensembl" id="ENSSSCT00070009274.1">
    <property type="protein sequence ID" value="ENSSSCP00070007611.1"/>
    <property type="gene ID" value="ENSSSCG00070004900.1"/>
</dbReference>
<dbReference type="Ensembl" id="ENSSSCT00085030601">
    <property type="protein sequence ID" value="ENSSSCP00085021148"/>
    <property type="gene ID" value="ENSSSCG00085016089"/>
</dbReference>
<dbReference type="Ensembl" id="ENSSSCT00105062197">
    <property type="protein sequence ID" value="ENSSSCP00105044170"/>
    <property type="gene ID" value="ENSSSCG00105032704"/>
</dbReference>
<dbReference type="Ensembl" id="ENSSSCT00110003022">
    <property type="protein sequence ID" value="ENSSSCP00110002374"/>
    <property type="gene ID" value="ENSSSCG00110001482"/>
</dbReference>
<dbReference type="Ensembl" id="ENSSSCT00115003413">
    <property type="protein sequence ID" value="ENSSSCP00115003143"/>
    <property type="gene ID" value="ENSSSCG00115002047"/>
</dbReference>
<dbReference type="Ensembl" id="ENSSSCT00130012350">
    <property type="protein sequence ID" value="ENSSSCP00130006216"/>
    <property type="gene ID" value="ENSSSCG00130006748"/>
</dbReference>
<dbReference type="GeneID" id="396705"/>
<dbReference type="KEGG" id="ssc:396705"/>
<dbReference type="CTD" id="89885"/>
<dbReference type="VGNC" id="VGNC:88020">
    <property type="gene designation" value="FATE1"/>
</dbReference>
<dbReference type="GeneTree" id="ENSGT00390000006832"/>
<dbReference type="InParanoid" id="Q95LB4"/>
<dbReference type="OMA" id="MEHGSQS"/>
<dbReference type="OrthoDB" id="5986838at2759"/>
<dbReference type="Proteomes" id="UP000008227">
    <property type="component" value="Chromosome X"/>
</dbReference>
<dbReference type="Proteomes" id="UP000314985">
    <property type="component" value="Unassembled WGS sequence"/>
</dbReference>
<dbReference type="Proteomes" id="UP000694570">
    <property type="component" value="Unplaced"/>
</dbReference>
<dbReference type="Proteomes" id="UP000694571">
    <property type="component" value="Unplaced"/>
</dbReference>
<dbReference type="Proteomes" id="UP000694720">
    <property type="component" value="Unplaced"/>
</dbReference>
<dbReference type="Proteomes" id="UP000694722">
    <property type="component" value="Unplaced"/>
</dbReference>
<dbReference type="Proteomes" id="UP000694723">
    <property type="component" value="Unplaced"/>
</dbReference>
<dbReference type="Proteomes" id="UP000694724">
    <property type="component" value="Unplaced"/>
</dbReference>
<dbReference type="Proteomes" id="UP000694725">
    <property type="component" value="Unplaced"/>
</dbReference>
<dbReference type="Proteomes" id="UP000694726">
    <property type="component" value="Unplaced"/>
</dbReference>
<dbReference type="Proteomes" id="UP000694727">
    <property type="component" value="Unplaced"/>
</dbReference>
<dbReference type="Proteomes" id="UP000694728">
    <property type="component" value="Unplaced"/>
</dbReference>
<dbReference type="Bgee" id="ENSSSCG00000039345">
    <property type="expression patterns" value="Expressed in testis and 3 other cell types or tissues"/>
</dbReference>
<dbReference type="GO" id="GO:0005783">
    <property type="term" value="C:endoplasmic reticulum"/>
    <property type="evidence" value="ECO:0000318"/>
    <property type="project" value="GO_Central"/>
</dbReference>
<dbReference type="GO" id="GO:0005789">
    <property type="term" value="C:endoplasmic reticulum membrane"/>
    <property type="evidence" value="ECO:0007669"/>
    <property type="project" value="UniProtKB-SubCell"/>
</dbReference>
<dbReference type="GO" id="GO:0044233">
    <property type="term" value="C:mitochondria-associated endoplasmic reticulum membrane contact site"/>
    <property type="evidence" value="ECO:0000318"/>
    <property type="project" value="GO_Central"/>
</dbReference>
<dbReference type="GO" id="GO:0005741">
    <property type="term" value="C:mitochondrial outer membrane"/>
    <property type="evidence" value="ECO:0000318"/>
    <property type="project" value="GO_Central"/>
</dbReference>
<dbReference type="GO" id="GO:0042802">
    <property type="term" value="F:identical protein binding"/>
    <property type="evidence" value="ECO:0007669"/>
    <property type="project" value="Ensembl"/>
</dbReference>
<dbReference type="GO" id="GO:0031625">
    <property type="term" value="F:ubiquitin protein ligase binding"/>
    <property type="evidence" value="ECO:0000318"/>
    <property type="project" value="GO_Central"/>
</dbReference>
<dbReference type="GO" id="GO:0006915">
    <property type="term" value="P:apoptotic process"/>
    <property type="evidence" value="ECO:0007669"/>
    <property type="project" value="UniProtKB-KW"/>
</dbReference>
<dbReference type="GO" id="GO:0043066">
    <property type="term" value="P:negative regulation of apoptotic process"/>
    <property type="evidence" value="ECO:0000318"/>
    <property type="project" value="GO_Central"/>
</dbReference>
<dbReference type="GO" id="GO:0051562">
    <property type="term" value="P:negative regulation of mitochondrial calcium ion concentration"/>
    <property type="evidence" value="ECO:0000318"/>
    <property type="project" value="GO_Central"/>
</dbReference>
<dbReference type="InterPro" id="IPR039153">
    <property type="entry name" value="FATE1"/>
</dbReference>
<dbReference type="InterPro" id="IPR039433">
    <property type="entry name" value="Mff-like_dom"/>
</dbReference>
<dbReference type="PANTHER" id="PTHR21128">
    <property type="entry name" value="FETAL AND ADULT TESTIS-EXPRESSED TRANSCRIPT PROTEIN"/>
    <property type="match status" value="1"/>
</dbReference>
<dbReference type="PANTHER" id="PTHR21128:SF0">
    <property type="entry name" value="FETAL AND ADULT TESTIS-EXPRESSED TRANSCRIPT PROTEIN"/>
    <property type="match status" value="1"/>
</dbReference>
<dbReference type="Pfam" id="PF05644">
    <property type="entry name" value="Miff"/>
    <property type="match status" value="1"/>
</dbReference>
<proteinExistence type="evidence at transcript level"/>
<protein>
    <recommendedName>
        <fullName>Fetal and adult testis-expressed transcript protein homolog</fullName>
    </recommendedName>
</protein>